<gene>
    <name evidence="1" type="primary">psmA</name>
    <name type="ordered locus">MmarC7_1253</name>
</gene>
<name>PSA_METM7</name>
<accession>A6VIP0</accession>
<feature type="chain" id="PRO_1000021789" description="Proteasome subunit alpha">
    <location>
        <begin position="1"/>
        <end position="259"/>
    </location>
</feature>
<keyword id="KW-0963">Cytoplasm</keyword>
<keyword id="KW-0647">Proteasome</keyword>
<evidence type="ECO:0000255" key="1">
    <source>
        <dbReference type="HAMAP-Rule" id="MF_00289"/>
    </source>
</evidence>
<protein>
    <recommendedName>
        <fullName evidence="1">Proteasome subunit alpha</fullName>
    </recommendedName>
    <alternativeName>
        <fullName evidence="1">20S proteasome alpha subunit</fullName>
    </alternativeName>
    <alternativeName>
        <fullName evidence="1">Proteasome core protein PsmA</fullName>
    </alternativeName>
</protein>
<comment type="function">
    <text evidence="1">Component of the proteasome core, a large protease complex with broad specificity involved in protein degradation.</text>
</comment>
<comment type="activity regulation">
    <text evidence="1">The formation of the proteasomal ATPase PAN-20S proteasome complex, via the docking of the C-termini of PAN into the intersubunit pockets in the alpha-rings, triggers opening of the gate for substrate entry. Interconversion between the open-gate and close-gate conformations leads to a dynamic regulation of the 20S proteasome proteolysis activity.</text>
</comment>
<comment type="subunit">
    <text evidence="1">The 20S proteasome core is composed of 14 alpha and 14 beta subunits that assemble into four stacked heptameric rings, resulting in a barrel-shaped structure. The two inner rings, each composed of seven catalytic beta subunits, are sandwiched by two outer rings, each composed of seven alpha subunits. The catalytic chamber with the active sites is on the inside of the barrel. Has a gated structure, the ends of the cylinder being occluded by the N-termini of the alpha-subunits. Is capped at one or both ends by the proteasome regulatory ATPase, PAN.</text>
</comment>
<comment type="subcellular location">
    <subcellularLocation>
        <location evidence="1">Cytoplasm</location>
    </subcellularLocation>
</comment>
<comment type="similarity">
    <text evidence="1">Belongs to the peptidase T1A family.</text>
</comment>
<organism>
    <name type="scientific">Methanococcus maripaludis (strain C7 / ATCC BAA-1331)</name>
    <dbReference type="NCBI Taxonomy" id="426368"/>
    <lineage>
        <taxon>Archaea</taxon>
        <taxon>Methanobacteriati</taxon>
        <taxon>Methanobacteriota</taxon>
        <taxon>Methanomada group</taxon>
        <taxon>Methanococci</taxon>
        <taxon>Methanococcales</taxon>
        <taxon>Methanococcaceae</taxon>
        <taxon>Methanococcus</taxon>
    </lineage>
</organism>
<sequence length="259" mass="28509">MQQMVPASGYDRAITIFSPEGRLYQVEYAREAVRRGTTAVGIKCKDGVVLAVDRRITSKLIDVSSIEKIFQIDDHIVAATSGLVADARVLIDRARLEAQMNRISYGEAITVEALAKKICDIKQAYTQHGGARPFGLALLITGIDRHSARLFETDPSGALIEYKATAIGSGRPIAMEVLESKYDENMTVNEGMELALYALSKTTEELKPENIDMAIVKDSGKLVEKISVDEIEKIVKAVYKKVEAEEAEAEKNKGEEDIE</sequence>
<reference key="1">
    <citation type="submission" date="2007-06" db="EMBL/GenBank/DDBJ databases">
        <title>Complete sequence of Methanococcus maripaludis C7.</title>
        <authorList>
            <consortium name="US DOE Joint Genome Institute"/>
            <person name="Copeland A."/>
            <person name="Lucas S."/>
            <person name="Lapidus A."/>
            <person name="Barry K."/>
            <person name="Glavina del Rio T."/>
            <person name="Dalin E."/>
            <person name="Tice H."/>
            <person name="Pitluck S."/>
            <person name="Clum A."/>
            <person name="Schmutz J."/>
            <person name="Larimer F."/>
            <person name="Land M."/>
            <person name="Hauser L."/>
            <person name="Kyrpides N."/>
            <person name="Anderson I."/>
            <person name="Sieprawska-Lupa M."/>
            <person name="Whitman W.B."/>
            <person name="Richardson P."/>
        </authorList>
    </citation>
    <scope>NUCLEOTIDE SEQUENCE [LARGE SCALE GENOMIC DNA]</scope>
    <source>
        <strain>C7 / ATCC BAA-1331</strain>
    </source>
</reference>
<proteinExistence type="inferred from homology"/>
<dbReference type="EMBL" id="CP000745">
    <property type="protein sequence ID" value="ABR66316.1"/>
    <property type="molecule type" value="Genomic_DNA"/>
</dbReference>
<dbReference type="SMR" id="A6VIP0"/>
<dbReference type="STRING" id="426368.MmarC7_1253"/>
<dbReference type="KEGG" id="mmz:MmarC7_1253"/>
<dbReference type="eggNOG" id="arCOG00971">
    <property type="taxonomic scope" value="Archaea"/>
</dbReference>
<dbReference type="HOGENOM" id="CLU_035750_4_1_2"/>
<dbReference type="OrthoDB" id="9421at2157"/>
<dbReference type="GO" id="GO:0005737">
    <property type="term" value="C:cytoplasm"/>
    <property type="evidence" value="ECO:0007669"/>
    <property type="project" value="UniProtKB-SubCell"/>
</dbReference>
<dbReference type="GO" id="GO:0019773">
    <property type="term" value="C:proteasome core complex, alpha-subunit complex"/>
    <property type="evidence" value="ECO:0000250"/>
    <property type="project" value="UniProtKB"/>
</dbReference>
<dbReference type="GO" id="GO:0004298">
    <property type="term" value="F:threonine-type endopeptidase activity"/>
    <property type="evidence" value="ECO:0007669"/>
    <property type="project" value="InterPro"/>
</dbReference>
<dbReference type="GO" id="GO:0010498">
    <property type="term" value="P:proteasomal protein catabolic process"/>
    <property type="evidence" value="ECO:0007669"/>
    <property type="project" value="UniProtKB-UniRule"/>
</dbReference>
<dbReference type="GO" id="GO:0006511">
    <property type="term" value="P:ubiquitin-dependent protein catabolic process"/>
    <property type="evidence" value="ECO:0007669"/>
    <property type="project" value="InterPro"/>
</dbReference>
<dbReference type="CDD" id="cd03756">
    <property type="entry name" value="proteasome_alpha_archeal"/>
    <property type="match status" value="1"/>
</dbReference>
<dbReference type="FunFam" id="3.60.20.10:FF:000004">
    <property type="entry name" value="Proteasome subunit alpha type-4"/>
    <property type="match status" value="1"/>
</dbReference>
<dbReference type="Gene3D" id="3.60.20.10">
    <property type="entry name" value="Glutamine Phosphoribosylpyrophosphate, subunit 1, domain 1"/>
    <property type="match status" value="1"/>
</dbReference>
<dbReference type="HAMAP" id="MF_00289_A">
    <property type="entry name" value="Proteasome_A_A"/>
    <property type="match status" value="1"/>
</dbReference>
<dbReference type="InterPro" id="IPR029055">
    <property type="entry name" value="Ntn_hydrolases_N"/>
</dbReference>
<dbReference type="InterPro" id="IPR050115">
    <property type="entry name" value="Proteasome_alpha"/>
</dbReference>
<dbReference type="InterPro" id="IPR023332">
    <property type="entry name" value="Proteasome_alpha-type"/>
</dbReference>
<dbReference type="InterPro" id="IPR019982">
    <property type="entry name" value="Proteasome_asu_arc"/>
</dbReference>
<dbReference type="InterPro" id="IPR000426">
    <property type="entry name" value="Proteasome_asu_N"/>
</dbReference>
<dbReference type="InterPro" id="IPR001353">
    <property type="entry name" value="Proteasome_sua/b"/>
</dbReference>
<dbReference type="NCBIfam" id="TIGR03633">
    <property type="entry name" value="arc_protsome_A"/>
    <property type="match status" value="1"/>
</dbReference>
<dbReference type="NCBIfam" id="NF003075">
    <property type="entry name" value="PRK03996.1"/>
    <property type="match status" value="1"/>
</dbReference>
<dbReference type="PANTHER" id="PTHR11599">
    <property type="entry name" value="PROTEASOME SUBUNIT ALPHA/BETA"/>
    <property type="match status" value="1"/>
</dbReference>
<dbReference type="Pfam" id="PF00227">
    <property type="entry name" value="Proteasome"/>
    <property type="match status" value="1"/>
</dbReference>
<dbReference type="Pfam" id="PF10584">
    <property type="entry name" value="Proteasome_A_N"/>
    <property type="match status" value="1"/>
</dbReference>
<dbReference type="SMART" id="SM00948">
    <property type="entry name" value="Proteasome_A_N"/>
    <property type="match status" value="1"/>
</dbReference>
<dbReference type="SUPFAM" id="SSF56235">
    <property type="entry name" value="N-terminal nucleophile aminohydrolases (Ntn hydrolases)"/>
    <property type="match status" value="1"/>
</dbReference>
<dbReference type="PROSITE" id="PS00388">
    <property type="entry name" value="PROTEASOME_ALPHA_1"/>
    <property type="match status" value="1"/>
</dbReference>
<dbReference type="PROSITE" id="PS51475">
    <property type="entry name" value="PROTEASOME_ALPHA_2"/>
    <property type="match status" value="1"/>
</dbReference>